<sequence>MNYQPTPEDRFTFGLWTVGWQGRDPFGDATRRALDPVESVRRLAELGAHGVTFHDDDLIPFGSSDSEREEHVKRFRQALDDTGMKVPMATTNLFTHPVFKDGGFTANDRDVRRYALRKTIRNIDLAVELGAETYVAWGGREGAESGGAKDVRDALDRMKEAFDLLGEYVTSQGYDIRFAIEPKPNEPRGDILLPTVGHALAFIERLERPELYGVNPEVGHEQMAGLNFPHGIAQALWAGKLFHIDLNGQNGIKYDQDLRFGAGDLRAAFWLVDLLESAGYSGPRHFDFKPPRTEDFDGVWASAAGCMRNYLILKERAAAFRADPEVQEALRASRLDELARPTAADGLQALLDDRSAFEEFDVDAAAARGMAFERLDQLAMDHLLGARG</sequence>
<feature type="initiator methionine" description="Removed">
    <location>
        <position position="1"/>
    </location>
</feature>
<feature type="chain" id="PRO_0000195805" description="Xylose isomerase">
    <location>
        <begin position="2"/>
        <end position="388"/>
    </location>
</feature>
<feature type="active site">
    <location>
        <position position="54"/>
    </location>
</feature>
<feature type="active site" evidence="1">
    <location>
        <position position="57"/>
    </location>
</feature>
<feature type="binding site">
    <location>
        <position position="181"/>
    </location>
    <ligand>
        <name>Mg(2+)</name>
        <dbReference type="ChEBI" id="CHEBI:18420"/>
        <label>1</label>
    </ligand>
</feature>
<feature type="binding site">
    <location>
        <position position="217"/>
    </location>
    <ligand>
        <name>Mg(2+)</name>
        <dbReference type="ChEBI" id="CHEBI:18420"/>
        <label>1</label>
    </ligand>
</feature>
<feature type="binding site">
    <location>
        <position position="217"/>
    </location>
    <ligand>
        <name>Mg(2+)</name>
        <dbReference type="ChEBI" id="CHEBI:18420"/>
        <label>2</label>
    </ligand>
</feature>
<feature type="binding site">
    <location>
        <position position="220"/>
    </location>
    <ligand>
        <name>Mg(2+)</name>
        <dbReference type="ChEBI" id="CHEBI:18420"/>
        <label>2</label>
    </ligand>
</feature>
<feature type="binding site">
    <location>
        <position position="245"/>
    </location>
    <ligand>
        <name>Mg(2+)</name>
        <dbReference type="ChEBI" id="CHEBI:18420"/>
        <label>1</label>
    </ligand>
</feature>
<feature type="binding site">
    <location>
        <position position="255"/>
    </location>
    <ligand>
        <name>Mg(2+)</name>
        <dbReference type="ChEBI" id="CHEBI:18420"/>
        <label>2</label>
    </ligand>
</feature>
<feature type="binding site">
    <location>
        <position position="257"/>
    </location>
    <ligand>
        <name>Mg(2+)</name>
        <dbReference type="ChEBI" id="CHEBI:18420"/>
        <label>2</label>
    </ligand>
</feature>
<feature type="binding site">
    <location>
        <position position="287"/>
    </location>
    <ligand>
        <name>Mg(2+)</name>
        <dbReference type="ChEBI" id="CHEBI:18420"/>
        <label>1</label>
    </ligand>
</feature>
<feature type="helix" evidence="6">
    <location>
        <begin position="7"/>
        <end position="9"/>
    </location>
</feature>
<feature type="strand" evidence="6">
    <location>
        <begin position="11"/>
        <end position="14"/>
    </location>
</feature>
<feature type="helix" evidence="6">
    <location>
        <begin position="15"/>
        <end position="18"/>
    </location>
</feature>
<feature type="strand" evidence="7">
    <location>
        <begin position="25"/>
        <end position="27"/>
    </location>
</feature>
<feature type="helix" evidence="6">
    <location>
        <begin position="36"/>
        <end position="45"/>
    </location>
</feature>
<feature type="strand" evidence="6">
    <location>
        <begin position="50"/>
        <end position="54"/>
    </location>
</feature>
<feature type="helix" evidence="6">
    <location>
        <begin position="55"/>
        <end position="58"/>
    </location>
</feature>
<feature type="helix" evidence="6">
    <location>
        <begin position="65"/>
        <end position="82"/>
    </location>
</feature>
<feature type="strand" evidence="6">
    <location>
        <begin position="85"/>
        <end position="90"/>
    </location>
</feature>
<feature type="strand" evidence="6">
    <location>
        <begin position="94"/>
        <end position="96"/>
    </location>
</feature>
<feature type="helix" evidence="6">
    <location>
        <begin position="97"/>
        <end position="99"/>
    </location>
</feature>
<feature type="strand" evidence="3">
    <location>
        <begin position="103"/>
        <end position="105"/>
    </location>
</feature>
<feature type="helix" evidence="6">
    <location>
        <begin position="109"/>
        <end position="128"/>
    </location>
</feature>
<feature type="strand" evidence="6">
    <location>
        <begin position="132"/>
        <end position="136"/>
    </location>
</feature>
<feature type="strand" evidence="6">
    <location>
        <begin position="142"/>
        <end position="146"/>
    </location>
</feature>
<feature type="helix" evidence="6">
    <location>
        <begin position="151"/>
        <end position="172"/>
    </location>
</feature>
<feature type="strand" evidence="6">
    <location>
        <begin position="177"/>
        <end position="180"/>
    </location>
</feature>
<feature type="strand" evidence="6">
    <location>
        <begin position="184"/>
        <end position="193"/>
    </location>
</feature>
<feature type="helix" evidence="6">
    <location>
        <begin position="196"/>
        <end position="203"/>
    </location>
</feature>
<feature type="strand" evidence="6">
    <location>
        <begin position="206"/>
        <end position="208"/>
    </location>
</feature>
<feature type="helix" evidence="6">
    <location>
        <begin position="209"/>
        <end position="211"/>
    </location>
</feature>
<feature type="strand" evidence="6">
    <location>
        <begin position="212"/>
        <end position="214"/>
    </location>
</feature>
<feature type="helix" evidence="6">
    <location>
        <begin position="218"/>
        <end position="222"/>
    </location>
</feature>
<feature type="turn" evidence="6">
    <location>
        <begin position="223"/>
        <end position="225"/>
    </location>
</feature>
<feature type="helix" evidence="6">
    <location>
        <begin position="228"/>
        <end position="237"/>
    </location>
</feature>
<feature type="strand" evidence="4">
    <location>
        <begin position="244"/>
        <end position="246"/>
    </location>
</feature>
<feature type="strand" evidence="6">
    <location>
        <begin position="251"/>
        <end position="254"/>
    </location>
</feature>
<feature type="strand" evidence="5">
    <location>
        <begin position="262"/>
        <end position="264"/>
    </location>
</feature>
<feature type="helix" evidence="6">
    <location>
        <begin position="265"/>
        <end position="277"/>
    </location>
</feature>
<feature type="strand" evidence="6">
    <location>
        <begin position="284"/>
        <end position="286"/>
    </location>
</feature>
<feature type="helix" evidence="6">
    <location>
        <begin position="296"/>
        <end position="322"/>
    </location>
</feature>
<feature type="helix" evidence="6">
    <location>
        <begin position="324"/>
        <end position="332"/>
    </location>
</feature>
<feature type="helix" evidence="6">
    <location>
        <begin position="335"/>
        <end position="338"/>
    </location>
</feature>
<feature type="helix" evidence="6">
    <location>
        <begin position="347"/>
        <end position="352"/>
    </location>
</feature>
<feature type="helix" evidence="6">
    <location>
        <begin position="354"/>
        <end position="356"/>
    </location>
</feature>
<feature type="turn" evidence="6">
    <location>
        <begin position="357"/>
        <end position="359"/>
    </location>
</feature>
<feature type="helix" evidence="6">
    <location>
        <begin position="362"/>
        <end position="367"/>
    </location>
</feature>
<feature type="helix" evidence="6">
    <location>
        <begin position="372"/>
        <end position="384"/>
    </location>
</feature>
<accession>P24300</accession>
<protein>
    <recommendedName>
        <fullName>Xylose isomerase</fullName>
        <ecNumber>5.3.1.5</ecNumber>
    </recommendedName>
</protein>
<evidence type="ECO:0000250" key="1"/>
<evidence type="ECO:0000305" key="2"/>
<evidence type="ECO:0007829" key="3">
    <source>
        <dbReference type="PDB" id="3CWH"/>
    </source>
</evidence>
<evidence type="ECO:0007829" key="4">
    <source>
        <dbReference type="PDB" id="4J4K"/>
    </source>
</evidence>
<evidence type="ECO:0007829" key="5">
    <source>
        <dbReference type="PDB" id="4ZBC"/>
    </source>
</evidence>
<evidence type="ECO:0007829" key="6">
    <source>
        <dbReference type="PDB" id="5AVH"/>
    </source>
</evidence>
<evidence type="ECO:0007829" key="7">
    <source>
        <dbReference type="PDB" id="8WDH"/>
    </source>
</evidence>
<dbReference type="EC" id="5.3.1.5"/>
<dbReference type="EMBL" id="M73789">
    <property type="protein sequence ID" value="AAA26838.1"/>
    <property type="molecule type" value="Genomic_DNA"/>
</dbReference>
<dbReference type="PIR" id="B41339">
    <property type="entry name" value="B41339"/>
</dbReference>
<dbReference type="PDB" id="1GW9">
    <property type="method" value="X-ray"/>
    <property type="resolution" value="1.55 A"/>
    <property type="chains" value="A=1-387"/>
</dbReference>
<dbReference type="PDB" id="1MNZ">
    <property type="method" value="X-ray"/>
    <property type="resolution" value="0.99 A"/>
    <property type="chains" value="A=1-388"/>
</dbReference>
<dbReference type="PDB" id="1O1H">
    <property type="method" value="X-ray"/>
    <property type="resolution" value="1.40 A"/>
    <property type="chains" value="A/B=2-388"/>
</dbReference>
<dbReference type="PDB" id="1OAD">
    <property type="method" value="X-ray"/>
    <property type="resolution" value="1.50 A"/>
    <property type="chains" value="A/B=2-388"/>
</dbReference>
<dbReference type="PDB" id="1XIB">
    <property type="method" value="X-ray"/>
    <property type="resolution" value="1.60 A"/>
    <property type="chains" value="A=1-388"/>
</dbReference>
<dbReference type="PDB" id="1XIC">
    <property type="method" value="X-ray"/>
    <property type="resolution" value="1.60 A"/>
    <property type="chains" value="A=1-388"/>
</dbReference>
<dbReference type="PDB" id="1XID">
    <property type="method" value="X-ray"/>
    <property type="resolution" value="1.70 A"/>
    <property type="chains" value="A=1-388"/>
</dbReference>
<dbReference type="PDB" id="1XIE">
    <property type="method" value="X-ray"/>
    <property type="resolution" value="1.70 A"/>
    <property type="chains" value="A=1-388"/>
</dbReference>
<dbReference type="PDB" id="1XIF">
    <property type="method" value="X-ray"/>
    <property type="resolution" value="1.60 A"/>
    <property type="chains" value="A=1-388"/>
</dbReference>
<dbReference type="PDB" id="1XIG">
    <property type="method" value="X-ray"/>
    <property type="resolution" value="1.70 A"/>
    <property type="chains" value="A=1-388"/>
</dbReference>
<dbReference type="PDB" id="1XIH">
    <property type="method" value="X-ray"/>
    <property type="resolution" value="1.70 A"/>
    <property type="chains" value="A=1-388"/>
</dbReference>
<dbReference type="PDB" id="1XII">
    <property type="method" value="X-ray"/>
    <property type="resolution" value="1.70 A"/>
    <property type="chains" value="A=1-388"/>
</dbReference>
<dbReference type="PDB" id="1XIJ">
    <property type="method" value="X-ray"/>
    <property type="resolution" value="1.70 A"/>
    <property type="chains" value="A=1-388"/>
</dbReference>
<dbReference type="PDB" id="1XIS">
    <property type="method" value="X-ray"/>
    <property type="resolution" value="1.60 A"/>
    <property type="chains" value="A=2-388"/>
</dbReference>
<dbReference type="PDB" id="2G4J">
    <property type="method" value="X-ray"/>
    <property type="resolution" value="1.85 A"/>
    <property type="chains" value="A=2-388"/>
</dbReference>
<dbReference type="PDB" id="2GLK">
    <property type="method" value="X-ray"/>
    <property type="resolution" value="0.94 A"/>
    <property type="chains" value="A=1-388"/>
</dbReference>
<dbReference type="PDB" id="2GUB">
    <property type="method" value="X-ray"/>
    <property type="resolution" value="1.80 A"/>
    <property type="chains" value="A=1-388"/>
</dbReference>
<dbReference type="PDB" id="2GVE">
    <property type="method" value="Neutron"/>
    <property type="resolution" value="2.20 A"/>
    <property type="chains" value="A=1-388"/>
</dbReference>
<dbReference type="PDB" id="2XIS">
    <property type="method" value="X-ray"/>
    <property type="resolution" value="1.71 A"/>
    <property type="chains" value="A=2-388"/>
</dbReference>
<dbReference type="PDB" id="3CWH">
    <property type="method" value="Neutron"/>
    <property type="resolution" value="2.20 A"/>
    <property type="chains" value="A=1-388"/>
</dbReference>
<dbReference type="PDB" id="3GNX">
    <property type="method" value="X-ray"/>
    <property type="resolution" value="2.00 A"/>
    <property type="chains" value="A/E=2-388"/>
</dbReference>
<dbReference type="PDB" id="3KBJ">
    <property type="method" value="X-ray"/>
    <property type="resolution" value="2.00 A"/>
    <property type="chains" value="A=1-388"/>
</dbReference>
<dbReference type="PDB" id="3KBM">
    <property type="method" value="X-ray"/>
    <property type="resolution" value="2.00 A"/>
    <property type="chains" value="A=1-388"/>
</dbReference>
<dbReference type="PDB" id="3KBN">
    <property type="method" value="X-ray"/>
    <property type="resolution" value="1.53 A"/>
    <property type="chains" value="A=1-388"/>
</dbReference>
<dbReference type="PDB" id="3KBS">
    <property type="method" value="X-ray"/>
    <property type="resolution" value="1.80 A"/>
    <property type="chains" value="A=1-388"/>
</dbReference>
<dbReference type="PDB" id="3KBV">
    <property type="method" value="X-ray"/>
    <property type="resolution" value="1.80 A"/>
    <property type="chains" value="A=1-388"/>
</dbReference>
<dbReference type="PDB" id="3KBW">
    <property type="method" value="X-ray"/>
    <property type="resolution" value="1.60 A"/>
    <property type="chains" value="A=1-388"/>
</dbReference>
<dbReference type="PDB" id="3KCJ">
    <property type="method" value="Other"/>
    <property type="resolution" value="1.80 A"/>
    <property type="chains" value="A=1-388"/>
</dbReference>
<dbReference type="PDB" id="3KCL">
    <property type="method" value="Other"/>
    <property type="resolution" value="2.00 A"/>
    <property type="chains" value="A=1-388"/>
</dbReference>
<dbReference type="PDB" id="3KCO">
    <property type="method" value="Other"/>
    <property type="resolution" value="1.80 A"/>
    <property type="chains" value="A=1-388"/>
</dbReference>
<dbReference type="PDB" id="3N4A">
    <property type="method" value="X-ray"/>
    <property type="resolution" value="1.94 A"/>
    <property type="chains" value="A=2-388"/>
</dbReference>
<dbReference type="PDB" id="3QYS">
    <property type="method" value="X-ray"/>
    <property type="resolution" value="1.85 A"/>
    <property type="chains" value="A=1-388"/>
</dbReference>
<dbReference type="PDB" id="3QZA">
    <property type="method" value="Other"/>
    <property type="resolution" value="2.00 A"/>
    <property type="chains" value="A=1-388"/>
</dbReference>
<dbReference type="PDB" id="3U3H">
    <property type="method" value="X-ray"/>
    <property type="resolution" value="0.97 A"/>
    <property type="chains" value="A=1-388"/>
</dbReference>
<dbReference type="PDB" id="3XIS">
    <property type="method" value="X-ray"/>
    <property type="resolution" value="1.60 A"/>
    <property type="chains" value="A=2-388"/>
</dbReference>
<dbReference type="PDB" id="4A8I">
    <property type="method" value="X-ray"/>
    <property type="resolution" value="0.95 A"/>
    <property type="chains" value="A=1-388"/>
</dbReference>
<dbReference type="PDB" id="4A8L">
    <property type="method" value="X-ray"/>
    <property type="resolution" value="1.35 A"/>
    <property type="chains" value="A=1-388"/>
</dbReference>
<dbReference type="PDB" id="4A8N">
    <property type="method" value="X-ray"/>
    <property type="resolution" value="1.20 A"/>
    <property type="chains" value="A=1-388"/>
</dbReference>
<dbReference type="PDB" id="4A8R">
    <property type="method" value="X-ray"/>
    <property type="resolution" value="1.42 A"/>
    <property type="chains" value="A=1-388"/>
</dbReference>
<dbReference type="PDB" id="4DUO">
    <property type="method" value="X-ray"/>
    <property type="resolution" value="2.00 A"/>
    <property type="chains" value="A=1-388"/>
</dbReference>
<dbReference type="PDB" id="4DVO">
    <property type="method" value="Other"/>
    <property type="resolution" value="2.00 A"/>
    <property type="chains" value="A=1-388"/>
</dbReference>
<dbReference type="PDB" id="4E3V">
    <property type="method" value="X-ray"/>
    <property type="resolution" value="1.50 A"/>
    <property type="chains" value="A=1-388"/>
</dbReference>
<dbReference type="PDB" id="4J4K">
    <property type="method" value="X-ray"/>
    <property type="resolution" value="1.90 A"/>
    <property type="chains" value="A=1-388"/>
</dbReference>
<dbReference type="PDB" id="4LNC">
    <property type="method" value="Other"/>
    <property type="resolution" value="2.19 A"/>
    <property type="chains" value="A=1-388"/>
</dbReference>
<dbReference type="PDB" id="4QDP">
    <property type="method" value="Other"/>
    <property type="resolution" value="2.00 A"/>
    <property type="chains" value="A=1-388"/>
</dbReference>
<dbReference type="PDB" id="4QDW">
    <property type="method" value="Other"/>
    <property type="resolution" value="1.80 A"/>
    <property type="chains" value="A=1-388"/>
</dbReference>
<dbReference type="PDB" id="4QE1">
    <property type="method" value="X-ray"/>
    <property type="resolution" value="1.55 A"/>
    <property type="chains" value="A=1-388"/>
</dbReference>
<dbReference type="PDB" id="4QE4">
    <property type="method" value="X-ray"/>
    <property type="resolution" value="1.70 A"/>
    <property type="chains" value="A=1-388"/>
</dbReference>
<dbReference type="PDB" id="4QE5">
    <property type="method" value="X-ray"/>
    <property type="resolution" value="1.56 A"/>
    <property type="chains" value="A=1-388"/>
</dbReference>
<dbReference type="PDB" id="4QEE">
    <property type="method" value="X-ray"/>
    <property type="resolution" value="1.60 A"/>
    <property type="chains" value="A=1-388"/>
</dbReference>
<dbReference type="PDB" id="4QEH">
    <property type="method" value="X-ray"/>
    <property type="resolution" value="1.55 A"/>
    <property type="chains" value="A=1-388"/>
</dbReference>
<dbReference type="PDB" id="4US6">
    <property type="method" value="X-ray"/>
    <property type="resolution" value="1.20 A"/>
    <property type="chains" value="A/B=1-388"/>
</dbReference>
<dbReference type="PDB" id="4W4Q">
    <property type="method" value="X-ray"/>
    <property type="resolution" value="2.00 A"/>
    <property type="chains" value="A=1-388"/>
</dbReference>
<dbReference type="PDB" id="4XIS">
    <property type="method" value="X-ray"/>
    <property type="resolution" value="1.60 A"/>
    <property type="chains" value="A=2-388"/>
</dbReference>
<dbReference type="PDB" id="4ZB0">
    <property type="method" value="X-ray"/>
    <property type="resolution" value="2.00 A"/>
    <property type="chains" value="A/B=2-388"/>
</dbReference>
<dbReference type="PDB" id="4ZB2">
    <property type="method" value="X-ray"/>
    <property type="resolution" value="2.00 A"/>
    <property type="chains" value="A=1-388"/>
</dbReference>
<dbReference type="PDB" id="4ZB5">
    <property type="method" value="X-ray"/>
    <property type="resolution" value="2.00 A"/>
    <property type="chains" value="A=1-387"/>
</dbReference>
<dbReference type="PDB" id="4ZBC">
    <property type="method" value="X-ray"/>
    <property type="resolution" value="2.00 A"/>
    <property type="chains" value="A/B=1-387"/>
</dbReference>
<dbReference type="PDB" id="5AVH">
    <property type="method" value="X-ray"/>
    <property type="resolution" value="0.90 A"/>
    <property type="chains" value="A=2-387"/>
</dbReference>
<dbReference type="PDB" id="5AVN">
    <property type="method" value="X-ray"/>
    <property type="resolution" value="1.03 A"/>
    <property type="chains" value="A/B=2-388"/>
</dbReference>
<dbReference type="PDB" id="5I7G">
    <property type="method" value="X-ray"/>
    <property type="resolution" value="1.21 A"/>
    <property type="chains" value="A=1-388"/>
</dbReference>
<dbReference type="PDB" id="5VR0">
    <property type="method" value="X-ray"/>
    <property type="resolution" value="1.70 A"/>
    <property type="chains" value="A=1-388"/>
</dbReference>
<dbReference type="PDB" id="5Y4I">
    <property type="method" value="X-ray"/>
    <property type="resolution" value="1.91 A"/>
    <property type="chains" value="A=1-388"/>
</dbReference>
<dbReference type="PDB" id="5Y4J">
    <property type="method" value="X-ray"/>
    <property type="resolution" value="1.40 A"/>
    <property type="chains" value="A=3-386"/>
</dbReference>
<dbReference type="PDB" id="5ZYC">
    <property type="method" value="X-ray"/>
    <property type="resolution" value="1.75 A"/>
    <property type="chains" value="A=1-388"/>
</dbReference>
<dbReference type="PDB" id="5ZYD">
    <property type="method" value="X-ray"/>
    <property type="resolution" value="1.40 A"/>
    <property type="chains" value="A=1-388"/>
</dbReference>
<dbReference type="PDB" id="5ZYE">
    <property type="method" value="X-ray"/>
    <property type="resolution" value="1.40 A"/>
    <property type="chains" value="A=1-388"/>
</dbReference>
<dbReference type="PDB" id="6IRK">
    <property type="method" value="X-ray"/>
    <property type="resolution" value="1.75 A"/>
    <property type="chains" value="A=1-388"/>
</dbReference>
<dbReference type="PDB" id="6KCA">
    <property type="method" value="X-ray"/>
    <property type="resolution" value="1.90 A"/>
    <property type="chains" value="A=1-388"/>
</dbReference>
<dbReference type="PDB" id="6KCC">
    <property type="method" value="X-ray"/>
    <property type="resolution" value="2.00 A"/>
    <property type="chains" value="A=1-388"/>
</dbReference>
<dbReference type="PDB" id="6KD2">
    <property type="method" value="X-ray"/>
    <property type="resolution" value="1.70 A"/>
    <property type="chains" value="A=1-388"/>
</dbReference>
<dbReference type="PDB" id="6LL2">
    <property type="method" value="X-ray"/>
    <property type="resolution" value="1.75 A"/>
    <property type="chains" value="A=1-388"/>
</dbReference>
<dbReference type="PDB" id="6OQZ">
    <property type="method" value="X-ray"/>
    <property type="resolution" value="1.60 A"/>
    <property type="chains" value="A=2-387"/>
</dbReference>
<dbReference type="PDB" id="6QNC">
    <property type="method" value="X-ray"/>
    <property type="resolution" value="1.90 A"/>
    <property type="chains" value="A=1-388"/>
</dbReference>
<dbReference type="PDB" id="6QND">
    <property type="method" value="X-ray"/>
    <property type="resolution" value="2.00 A"/>
    <property type="chains" value="A=1-388"/>
</dbReference>
<dbReference type="PDB" id="6QNH">
    <property type="method" value="X-ray"/>
    <property type="resolution" value="1.85 A"/>
    <property type="chains" value="A=1-388"/>
</dbReference>
<dbReference type="PDB" id="6QNI">
    <property type="method" value="X-ray"/>
    <property type="resolution" value="1.85 A"/>
    <property type="chains" value="A=1-388"/>
</dbReference>
<dbReference type="PDB" id="6QNJ">
    <property type="method" value="X-ray"/>
    <property type="resolution" value="1.85 A"/>
    <property type="chains" value="A=1-388"/>
</dbReference>
<dbReference type="PDB" id="6QRR">
    <property type="method" value="X-ray"/>
    <property type="resolution" value="1.10 A"/>
    <property type="chains" value="A=1-388"/>
</dbReference>
<dbReference type="PDB" id="6QRS">
    <property type="method" value="X-ray"/>
    <property type="resolution" value="1.17 A"/>
    <property type="chains" value="A=1-388"/>
</dbReference>
<dbReference type="PDB" id="6QRT">
    <property type="method" value="X-ray"/>
    <property type="resolution" value="1.17 A"/>
    <property type="chains" value="A=1-388"/>
</dbReference>
<dbReference type="PDB" id="6QRU">
    <property type="method" value="X-ray"/>
    <property type="resolution" value="1.17 A"/>
    <property type="chains" value="A=1-388"/>
</dbReference>
<dbReference type="PDB" id="6QRV">
    <property type="method" value="X-ray"/>
    <property type="resolution" value="1.17 A"/>
    <property type="chains" value="A=1-388"/>
</dbReference>
<dbReference type="PDB" id="6QRW">
    <property type="method" value="X-ray"/>
    <property type="resolution" value="1.17 A"/>
    <property type="chains" value="A=1-388"/>
</dbReference>
<dbReference type="PDB" id="6QRX">
    <property type="method" value="X-ray"/>
    <property type="resolution" value="1.17 A"/>
    <property type="chains" value="A=1-388"/>
</dbReference>
<dbReference type="PDB" id="6QRY">
    <property type="method" value="X-ray"/>
    <property type="resolution" value="1.17 A"/>
    <property type="chains" value="A=1-388"/>
</dbReference>
<dbReference type="PDB" id="6QUF">
    <property type="method" value="X-ray"/>
    <property type="resolution" value="1.19 A"/>
    <property type="chains" value="A=1-388"/>
</dbReference>
<dbReference type="PDB" id="6QUK">
    <property type="method" value="X-ray"/>
    <property type="resolution" value="1.58 A"/>
    <property type="chains" value="A/B=1-388"/>
</dbReference>
<dbReference type="PDB" id="6RND">
    <property type="method" value="X-ray"/>
    <property type="resolution" value="1.70 A"/>
    <property type="chains" value="A=1-388"/>
</dbReference>
<dbReference type="PDB" id="6RNF">
    <property type="method" value="X-ray"/>
    <property type="resolution" value="1.70 A"/>
    <property type="chains" value="A=1-388"/>
</dbReference>
<dbReference type="PDB" id="6VRS">
    <property type="method" value="EM"/>
    <property type="resolution" value="2.70 A"/>
    <property type="chains" value="A/B/C/D=1-388"/>
</dbReference>
<dbReference type="PDB" id="6YBO">
    <property type="method" value="X-ray"/>
    <property type="resolution" value="1.06 A"/>
    <property type="chains" value="A=1-388"/>
</dbReference>
<dbReference type="PDB" id="6YBR">
    <property type="method" value="X-ray"/>
    <property type="resolution" value="1.20 A"/>
    <property type="chains" value="A=1-388"/>
</dbReference>
<dbReference type="PDB" id="7BJZ">
    <property type="method" value="X-ray"/>
    <property type="resolution" value="2.13 A"/>
    <property type="chains" value="A/B=1-388"/>
</dbReference>
<dbReference type="PDB" id="7BVL">
    <property type="method" value="X-ray"/>
    <property type="resolution" value="2.00 A"/>
    <property type="chains" value="A=1-388"/>
</dbReference>
<dbReference type="PDB" id="7BVN">
    <property type="method" value="X-ray"/>
    <property type="resolution" value="2.00 A"/>
    <property type="chains" value="A=1-388"/>
</dbReference>
<dbReference type="PDB" id="7CJO">
    <property type="method" value="X-ray"/>
    <property type="resolution" value="1.40 A"/>
    <property type="chains" value="A/B=1-388"/>
</dbReference>
<dbReference type="PDB" id="7CJP">
    <property type="method" value="X-ray"/>
    <property type="resolution" value="1.50 A"/>
    <property type="chains" value="A/B=1-388"/>
</dbReference>
<dbReference type="PDB" id="7CK0">
    <property type="method" value="X-ray"/>
    <property type="resolution" value="1.80 A"/>
    <property type="chains" value="A=1-388"/>
</dbReference>
<dbReference type="PDB" id="7CVK">
    <property type="method" value="X-ray"/>
    <property type="resolution" value="1.70 A"/>
    <property type="chains" value="A=1-388"/>
</dbReference>
<dbReference type="PDB" id="7CVM">
    <property type="method" value="X-ray"/>
    <property type="resolution" value="2.00 A"/>
    <property type="chains" value="A=1-388"/>
</dbReference>
<dbReference type="PDB" id="7DFJ">
    <property type="method" value="X-ray"/>
    <property type="resolution" value="1.50 A"/>
    <property type="chains" value="A=1-388"/>
</dbReference>
<dbReference type="PDB" id="7DFK">
    <property type="method" value="X-ray"/>
    <property type="resolution" value="1.40 A"/>
    <property type="chains" value="A=1-388"/>
</dbReference>
<dbReference type="PDB" id="7DMM">
    <property type="method" value="X-ray"/>
    <property type="resolution" value="0.99 A"/>
    <property type="chains" value="A=2-387"/>
</dbReference>
<dbReference type="PDB" id="7E03">
    <property type="method" value="X-ray"/>
    <property type="resolution" value="1.60 A"/>
    <property type="chains" value="A=1-388"/>
</dbReference>
<dbReference type="PDB" id="7NJG">
    <property type="method" value="X-ray"/>
    <property type="resolution" value="1.90 A"/>
    <property type="chains" value="A=1-388"/>
</dbReference>
<dbReference type="PDB" id="8AW8">
    <property type="method" value="X-ray"/>
    <property type="resolution" value="1.63 A"/>
    <property type="chains" value="A/B=1-388"/>
</dbReference>
<dbReference type="PDB" id="8AW9">
    <property type="method" value="X-ray"/>
    <property type="resolution" value="1.62 A"/>
    <property type="chains" value="A/B=1-388"/>
</dbReference>
<dbReference type="PDB" id="8AWB">
    <property type="method" value="X-ray"/>
    <property type="resolution" value="2.30 A"/>
    <property type="chains" value="A=1-388"/>
</dbReference>
<dbReference type="PDB" id="8AWC">
    <property type="method" value="X-ray"/>
    <property type="resolution" value="1.75 A"/>
    <property type="chains" value="A=1-388"/>
</dbReference>
<dbReference type="PDB" id="8AWD">
    <property type="method" value="X-ray"/>
    <property type="resolution" value="1.85 A"/>
    <property type="chains" value="A=1-388"/>
</dbReference>
<dbReference type="PDB" id="8AWE">
    <property type="method" value="X-ray"/>
    <property type="resolution" value="1.70 A"/>
    <property type="chains" value="A=1-388"/>
</dbReference>
<dbReference type="PDB" id="8AWF">
    <property type="method" value="X-ray"/>
    <property type="resolution" value="1.61 A"/>
    <property type="chains" value="A/B=1-388"/>
</dbReference>
<dbReference type="PDB" id="8AWS">
    <property type="method" value="X-ray"/>
    <property type="resolution" value="2.26 A"/>
    <property type="chains" value="A=1-388"/>
</dbReference>
<dbReference type="PDB" id="8AWU">
    <property type="method" value="X-ray"/>
    <property type="resolution" value="1.47 A"/>
    <property type="chains" value="A=1-388"/>
</dbReference>
<dbReference type="PDB" id="8AWV">
    <property type="method" value="X-ray"/>
    <property type="resolution" value="2.08 A"/>
    <property type="chains" value="A=1-388"/>
</dbReference>
<dbReference type="PDB" id="8AWX">
    <property type="method" value="X-ray"/>
    <property type="resolution" value="1.96 A"/>
    <property type="chains" value="A=1-388"/>
</dbReference>
<dbReference type="PDB" id="8AWY">
    <property type="method" value="X-ray"/>
    <property type="resolution" value="1.60 A"/>
    <property type="chains" value="A=1-388"/>
</dbReference>
<dbReference type="PDB" id="8WDG">
    <property type="method" value="X-ray"/>
    <property type="resolution" value="0.99 A"/>
    <property type="chains" value="A=3-387"/>
</dbReference>
<dbReference type="PDB" id="8WDH">
    <property type="method" value="X-ray"/>
    <property type="resolution" value="1.70 A"/>
    <property type="chains" value="A=3-387"/>
</dbReference>
<dbReference type="PDB" id="8XIA">
    <property type="method" value="X-ray"/>
    <property type="resolution" value="1.90 A"/>
    <property type="chains" value="A=1-388"/>
</dbReference>
<dbReference type="PDB" id="9GRD">
    <property type="method" value="EM"/>
    <property type="resolution" value="1.99 A"/>
    <property type="chains" value="A/B/C/D=1-388"/>
</dbReference>
<dbReference type="PDB" id="9GRE">
    <property type="method" value="EM"/>
    <property type="resolution" value="2.00 A"/>
    <property type="chains" value="A/B/C/D=1-388"/>
</dbReference>
<dbReference type="PDB" id="9XIA">
    <property type="method" value="X-ray"/>
    <property type="resolution" value="1.90 A"/>
    <property type="chains" value="A=1-388"/>
</dbReference>
<dbReference type="PDBsum" id="1GW9"/>
<dbReference type="PDBsum" id="1MNZ"/>
<dbReference type="PDBsum" id="1O1H"/>
<dbReference type="PDBsum" id="1OAD"/>
<dbReference type="PDBsum" id="1XIB"/>
<dbReference type="PDBsum" id="1XIC"/>
<dbReference type="PDBsum" id="1XID"/>
<dbReference type="PDBsum" id="1XIE"/>
<dbReference type="PDBsum" id="1XIF"/>
<dbReference type="PDBsum" id="1XIG"/>
<dbReference type="PDBsum" id="1XIH"/>
<dbReference type="PDBsum" id="1XII"/>
<dbReference type="PDBsum" id="1XIJ"/>
<dbReference type="PDBsum" id="1XIS"/>
<dbReference type="PDBsum" id="2G4J"/>
<dbReference type="PDBsum" id="2GLK"/>
<dbReference type="PDBsum" id="2GUB"/>
<dbReference type="PDBsum" id="2GVE"/>
<dbReference type="PDBsum" id="2XIS"/>
<dbReference type="PDBsum" id="3CWH"/>
<dbReference type="PDBsum" id="3GNX"/>
<dbReference type="PDBsum" id="3KBJ"/>
<dbReference type="PDBsum" id="3KBM"/>
<dbReference type="PDBsum" id="3KBN"/>
<dbReference type="PDBsum" id="3KBS"/>
<dbReference type="PDBsum" id="3KBV"/>
<dbReference type="PDBsum" id="3KBW"/>
<dbReference type="PDBsum" id="3KCJ"/>
<dbReference type="PDBsum" id="3KCL"/>
<dbReference type="PDBsum" id="3KCO"/>
<dbReference type="PDBsum" id="3N4A"/>
<dbReference type="PDBsum" id="3QYS"/>
<dbReference type="PDBsum" id="3QZA"/>
<dbReference type="PDBsum" id="3U3H"/>
<dbReference type="PDBsum" id="3XIS"/>
<dbReference type="PDBsum" id="4A8I"/>
<dbReference type="PDBsum" id="4A8L"/>
<dbReference type="PDBsum" id="4A8N"/>
<dbReference type="PDBsum" id="4A8R"/>
<dbReference type="PDBsum" id="4DUO"/>
<dbReference type="PDBsum" id="4DVO"/>
<dbReference type="PDBsum" id="4E3V"/>
<dbReference type="PDBsum" id="4J4K"/>
<dbReference type="PDBsum" id="4LNC"/>
<dbReference type="PDBsum" id="4QDP"/>
<dbReference type="PDBsum" id="4QDW"/>
<dbReference type="PDBsum" id="4QE1"/>
<dbReference type="PDBsum" id="4QE4"/>
<dbReference type="PDBsum" id="4QE5"/>
<dbReference type="PDBsum" id="4QEE"/>
<dbReference type="PDBsum" id="4QEH"/>
<dbReference type="PDBsum" id="4US6"/>
<dbReference type="PDBsum" id="4W4Q"/>
<dbReference type="PDBsum" id="4XIS"/>
<dbReference type="PDBsum" id="4ZB0"/>
<dbReference type="PDBsum" id="4ZB2"/>
<dbReference type="PDBsum" id="4ZB5"/>
<dbReference type="PDBsum" id="4ZBC"/>
<dbReference type="PDBsum" id="5AVH"/>
<dbReference type="PDBsum" id="5AVN"/>
<dbReference type="PDBsum" id="5I7G"/>
<dbReference type="PDBsum" id="5VR0"/>
<dbReference type="PDBsum" id="5Y4I"/>
<dbReference type="PDBsum" id="5Y4J"/>
<dbReference type="PDBsum" id="5ZYC"/>
<dbReference type="PDBsum" id="5ZYD"/>
<dbReference type="PDBsum" id="5ZYE"/>
<dbReference type="PDBsum" id="6IRK"/>
<dbReference type="PDBsum" id="6KCA"/>
<dbReference type="PDBsum" id="6KCC"/>
<dbReference type="PDBsum" id="6KD2"/>
<dbReference type="PDBsum" id="6LL2"/>
<dbReference type="PDBsum" id="6OQZ"/>
<dbReference type="PDBsum" id="6QNC"/>
<dbReference type="PDBsum" id="6QND"/>
<dbReference type="PDBsum" id="6QNH"/>
<dbReference type="PDBsum" id="6QNI"/>
<dbReference type="PDBsum" id="6QNJ"/>
<dbReference type="PDBsum" id="6QRR"/>
<dbReference type="PDBsum" id="6QRS"/>
<dbReference type="PDBsum" id="6QRT"/>
<dbReference type="PDBsum" id="6QRU"/>
<dbReference type="PDBsum" id="6QRV"/>
<dbReference type="PDBsum" id="6QRW"/>
<dbReference type="PDBsum" id="6QRX"/>
<dbReference type="PDBsum" id="6QRY"/>
<dbReference type="PDBsum" id="6QUF"/>
<dbReference type="PDBsum" id="6QUK"/>
<dbReference type="PDBsum" id="6RND"/>
<dbReference type="PDBsum" id="6RNF"/>
<dbReference type="PDBsum" id="6VRS"/>
<dbReference type="PDBsum" id="6YBO"/>
<dbReference type="PDBsum" id="6YBR"/>
<dbReference type="PDBsum" id="7BJZ"/>
<dbReference type="PDBsum" id="7BVL"/>
<dbReference type="PDBsum" id="7BVN"/>
<dbReference type="PDBsum" id="7CJO"/>
<dbReference type="PDBsum" id="7CJP"/>
<dbReference type="PDBsum" id="7CK0"/>
<dbReference type="PDBsum" id="7CVK"/>
<dbReference type="PDBsum" id="7CVM"/>
<dbReference type="PDBsum" id="7DFJ"/>
<dbReference type="PDBsum" id="7DFK"/>
<dbReference type="PDBsum" id="7DMM"/>
<dbReference type="PDBsum" id="7E03"/>
<dbReference type="PDBsum" id="7NJG"/>
<dbReference type="PDBsum" id="8AW8"/>
<dbReference type="PDBsum" id="8AW9"/>
<dbReference type="PDBsum" id="8AWB"/>
<dbReference type="PDBsum" id="8AWC"/>
<dbReference type="PDBsum" id="8AWD"/>
<dbReference type="PDBsum" id="8AWE"/>
<dbReference type="PDBsum" id="8AWF"/>
<dbReference type="PDBsum" id="8AWS"/>
<dbReference type="PDBsum" id="8AWU"/>
<dbReference type="PDBsum" id="8AWV"/>
<dbReference type="PDBsum" id="8AWX"/>
<dbReference type="PDBsum" id="8AWY"/>
<dbReference type="PDBsum" id="8WDG"/>
<dbReference type="PDBsum" id="8WDH"/>
<dbReference type="PDBsum" id="8XIA"/>
<dbReference type="PDBsum" id="9GRD"/>
<dbReference type="PDBsum" id="9GRE"/>
<dbReference type="PDBsum" id="9XIA"/>
<dbReference type="EMDB" id="EMD-21371"/>
<dbReference type="EMDB" id="EMD-51521"/>
<dbReference type="EMDB" id="EMD-51522"/>
<dbReference type="SASBDB" id="P24300"/>
<dbReference type="SMR" id="P24300"/>
<dbReference type="DIP" id="DIP-58982N"/>
<dbReference type="DrugBank" id="DB03564">
    <property type="generic name" value="(4r)-2-Methylpentane-2,4-Diol"/>
</dbReference>
<dbReference type="DrugBank" id="DB01881">
    <property type="generic name" value="2-Methylpentane-1,2,4-Triol"/>
</dbReference>
<dbReference type="DrugBank" id="DB00126">
    <property type="generic name" value="Ascorbic acid"/>
</dbReference>
<dbReference type="DrugBank" id="DB02379">
    <property type="generic name" value="Beta-D-Glucose"/>
</dbReference>
<dbReference type="DrugBank" id="DB03947">
    <property type="generic name" value="D-Xylulose"/>
</dbReference>
<dbReference type="DrugBank" id="DB03911">
    <property type="generic name" value="L-Xylopyranose"/>
</dbReference>
<dbReference type="DrugBank" id="DB11195">
    <property type="generic name" value="Xylitol"/>
</dbReference>
<dbReference type="KEGG" id="ag:AAA26838"/>
<dbReference type="BRENDA" id="5.3.1.5">
    <property type="organism ID" value="6089"/>
</dbReference>
<dbReference type="EvolutionaryTrace" id="P24300"/>
<dbReference type="GO" id="GO:0005737">
    <property type="term" value="C:cytoplasm"/>
    <property type="evidence" value="ECO:0007669"/>
    <property type="project" value="UniProtKB-SubCell"/>
</dbReference>
<dbReference type="GO" id="GO:0042802">
    <property type="term" value="F:identical protein binding"/>
    <property type="evidence" value="ECO:0000353"/>
    <property type="project" value="IntAct"/>
</dbReference>
<dbReference type="GO" id="GO:0000287">
    <property type="term" value="F:magnesium ion binding"/>
    <property type="evidence" value="ECO:0007669"/>
    <property type="project" value="UniProtKB-UniRule"/>
</dbReference>
<dbReference type="GO" id="GO:0009045">
    <property type="term" value="F:xylose isomerase activity"/>
    <property type="evidence" value="ECO:0007669"/>
    <property type="project" value="UniProtKB-UniRule"/>
</dbReference>
<dbReference type="GO" id="GO:0042732">
    <property type="term" value="P:D-xylose metabolic process"/>
    <property type="evidence" value="ECO:0007669"/>
    <property type="project" value="UniProtKB-UniRule"/>
</dbReference>
<dbReference type="FunFam" id="3.20.20.150:FF:000009">
    <property type="entry name" value="Xylose isomerase"/>
    <property type="match status" value="1"/>
</dbReference>
<dbReference type="Gene3D" id="3.20.20.150">
    <property type="entry name" value="Divalent-metal-dependent TIM barrel enzymes"/>
    <property type="match status" value="1"/>
</dbReference>
<dbReference type="HAMAP" id="MF_00455">
    <property type="entry name" value="Xylose_isom_A"/>
    <property type="match status" value="1"/>
</dbReference>
<dbReference type="InterPro" id="IPR036237">
    <property type="entry name" value="Xyl_isomerase-like_sf"/>
</dbReference>
<dbReference type="InterPro" id="IPR013022">
    <property type="entry name" value="Xyl_isomerase-like_TIM-brl"/>
</dbReference>
<dbReference type="InterPro" id="IPR013453">
    <property type="entry name" value="XylA_actinobac"/>
</dbReference>
<dbReference type="InterPro" id="IPR001998">
    <property type="entry name" value="Xylose_isomerase"/>
</dbReference>
<dbReference type="NCBIfam" id="TIGR02631">
    <property type="entry name" value="xylA_Arthro"/>
    <property type="match status" value="1"/>
</dbReference>
<dbReference type="PANTHER" id="PTHR48408">
    <property type="match status" value="1"/>
</dbReference>
<dbReference type="PANTHER" id="PTHR48408:SF1">
    <property type="entry name" value="XYLOSE ISOMERASE"/>
    <property type="match status" value="1"/>
</dbReference>
<dbReference type="Pfam" id="PF01261">
    <property type="entry name" value="AP_endonuc_2"/>
    <property type="match status" value="1"/>
</dbReference>
<dbReference type="PRINTS" id="PR00688">
    <property type="entry name" value="XYLOSISMRASE"/>
</dbReference>
<dbReference type="SUPFAM" id="SSF51658">
    <property type="entry name" value="Xylose isomerase-like"/>
    <property type="match status" value="1"/>
</dbReference>
<dbReference type="PROSITE" id="PS51415">
    <property type="entry name" value="XYLOSE_ISOMERASE"/>
    <property type="match status" value="1"/>
</dbReference>
<keyword id="KW-0002">3D-structure</keyword>
<keyword id="KW-0119">Carbohydrate metabolism</keyword>
<keyword id="KW-0963">Cytoplasm</keyword>
<keyword id="KW-0413">Isomerase</keyword>
<keyword id="KW-0460">Magnesium</keyword>
<keyword id="KW-0479">Metal-binding</keyword>
<keyword id="KW-0859">Xylose metabolism</keyword>
<organism>
    <name type="scientific">Streptomyces rubiginosus</name>
    <dbReference type="NCBI Taxonomy" id="1929"/>
    <lineage>
        <taxon>Bacteria</taxon>
        <taxon>Bacillati</taxon>
        <taxon>Actinomycetota</taxon>
        <taxon>Actinomycetes</taxon>
        <taxon>Kitasatosporales</taxon>
        <taxon>Streptomycetaceae</taxon>
        <taxon>Streptomyces</taxon>
        <taxon>Streptomyces pseudogriseolus group</taxon>
    </lineage>
</organism>
<gene>
    <name type="primary">xylA</name>
</gene>
<name>XYLA_STRRU</name>
<comment type="function">
    <text>Involved in D-xylose catabolism.</text>
</comment>
<comment type="catalytic activity">
    <reaction>
        <text>alpha-D-xylose = alpha-D-xylulofuranose</text>
        <dbReference type="Rhea" id="RHEA:22816"/>
        <dbReference type="ChEBI" id="CHEBI:28518"/>
        <dbReference type="ChEBI" id="CHEBI:188998"/>
        <dbReference type="EC" id="5.3.1.5"/>
    </reaction>
</comment>
<comment type="cofactor">
    <cofactor evidence="1">
        <name>Mg(2+)</name>
        <dbReference type="ChEBI" id="CHEBI:18420"/>
    </cofactor>
    <text evidence="1">Binds 2 magnesium ions per subunit.</text>
</comment>
<comment type="subunit">
    <text>Homotetramer.</text>
</comment>
<comment type="interaction">
    <interactant intactId="EBI-15859851">
        <id>P24300</id>
    </interactant>
    <interactant intactId="EBI-15859851">
        <id>P24300</id>
        <label>xylA</label>
    </interactant>
    <organismsDiffer>false</organismsDiffer>
    <experiments>4</experiments>
</comment>
<comment type="subcellular location">
    <subcellularLocation>
        <location>Cytoplasm</location>
    </subcellularLocation>
</comment>
<comment type="similarity">
    <text evidence="2">Belongs to the xylose isomerase family.</text>
</comment>
<comment type="caution">
    <text evidence="2">According to the crystallographic study residue 40 could be Gln.</text>
</comment>
<proteinExistence type="evidence at protein level"/>
<reference key="1">
    <citation type="journal article" date="1991" name="J. Bacteriol.">
        <title>Genetic organization and regulation of the xylose degradation genes in Streptomyces rubiginosus.</title>
        <authorList>
            <person name="Wong H.C."/>
            <person name="Ting Y."/>
            <person name="Lin H.C."/>
            <person name="Reichert F."/>
            <person name="Myambo K."/>
            <person name="Watt K.W."/>
            <person name="Toy P.L."/>
            <person name="Drummond R.J."/>
        </authorList>
    </citation>
    <scope>NUCLEOTIDE SEQUENCE [GENOMIC DNA]</scope>
</reference>
<reference key="2">
    <citation type="journal article" date="1989" name="Proc. Natl. Acad. Sci. U.S.A.">
        <title>X-ray analysis of D-xylose isomerase at 1.9 A: native enzyme in complex with substrate and with a mechanism-designed inactivator.</title>
        <authorList>
            <person name="Carrell H.L."/>
            <person name="Glusker J.P."/>
            <person name="Burger V."/>
            <person name="Manfre F."/>
            <person name="Tritsch D."/>
            <person name="Biellmann J.-F."/>
        </authorList>
    </citation>
    <scope>X-RAY CRYSTALLOGRAPHY (1.9 ANGSTROMS)</scope>
</reference>
<reference key="3">
    <citation type="journal article" date="1991" name="Proteins">
        <title>A metal-mediated hydride shift mechanism for xylose isomerase based on the 1.6 A Streptomyces rubiginosus structures with xylitol and D-xylose.</title>
        <authorList>
            <person name="Whitlow M."/>
            <person name="Howard A.J."/>
            <person name="Finzel B.C."/>
            <person name="Poulos T.L."/>
            <person name="Winborne E."/>
            <person name="Gilliland G.L."/>
        </authorList>
    </citation>
    <scope>X-RAY CRYSTALLOGRAPHY (1.6 ANGSTROMS)</scope>
</reference>